<sequence length="398" mass="45092">MMKPEFSHFFGFCVYFLFLQVMASSEKLRVTTPTRHLLARVGGQAELSCQVIPPHSVMHMEVRWFRSGHSQPVYLYRGGHKMSEEAAPEYANRTEFVKEAIGEGKVSLRIYNINILDDGPYQCSFNDSGFIDVAIMNLNVTAVGLETEIHVQAPDADGVMVECNTGGWFPRPQMEWRDSKGATLPHSLKSYSQDEARFFHMKMTLLLTNMSHGSIICCISNPVTGEEKQTSIILANELFNQDYLWVGIFPFSVLSLILFGVLPFINSFFRSQGCASGCLSKCLPVVTSWPVQIVHFLVCSGVLFAVYLPHRYRVSLSDPQFPLYNNWITELLIVILFLTICFVLPITVLLLIKLSPTCLAKWEKNKDDIMDSQLGLGKAREASTLYEEQSRKSWEQEK</sequence>
<evidence type="ECO:0000250" key="1"/>
<evidence type="ECO:0000255" key="2"/>
<evidence type="ECO:0000255" key="3">
    <source>
        <dbReference type="PROSITE-ProRule" id="PRU00114"/>
    </source>
</evidence>
<evidence type="ECO:0000269" key="4">
    <source>
    </source>
</evidence>
<evidence type="ECO:0000303" key="5">
    <source>
    </source>
</evidence>
<evidence type="ECO:0000305" key="6"/>
<feature type="signal peptide" evidence="2">
    <location>
        <begin position="1"/>
        <end position="25"/>
    </location>
</feature>
<feature type="chain" id="PRO_5000271643" description="Selection and upkeep of intraepithelial T-cells protein 8">
    <location>
        <begin position="26"/>
        <end position="398"/>
    </location>
</feature>
<feature type="topological domain" description="Extracellular" evidence="2">
    <location>
        <begin position="26"/>
        <end position="244"/>
    </location>
</feature>
<feature type="transmembrane region" description="Helical" evidence="2">
    <location>
        <begin position="245"/>
        <end position="265"/>
    </location>
</feature>
<feature type="topological domain" description="Cytoplasmic" evidence="2">
    <location>
        <begin position="266"/>
        <end position="288"/>
    </location>
</feature>
<feature type="transmembrane region" description="Helical" evidence="2">
    <location>
        <begin position="289"/>
        <end position="309"/>
    </location>
</feature>
<feature type="topological domain" description="Extracellular" evidence="2">
    <location>
        <begin position="310"/>
        <end position="331"/>
    </location>
</feature>
<feature type="transmembrane region" description="Helical" evidence="2">
    <location>
        <begin position="332"/>
        <end position="352"/>
    </location>
</feature>
<feature type="topological domain" description="Cytoplasmic" evidence="2">
    <location>
        <begin position="353"/>
        <end position="398"/>
    </location>
</feature>
<feature type="domain" description="Ig-like V-type">
    <location>
        <begin position="26"/>
        <end position="141"/>
    </location>
</feature>
<feature type="domain" description="Ig-like C1-type">
    <location>
        <begin position="142"/>
        <end position="233"/>
    </location>
</feature>
<feature type="glycosylation site" description="N-linked (GlcNAc...) asparagine" evidence="2">
    <location>
        <position position="92"/>
    </location>
</feature>
<feature type="glycosylation site" description="N-linked (GlcNAc...) asparagine" evidence="2">
    <location>
        <position position="139"/>
    </location>
</feature>
<feature type="disulfide bond" evidence="3">
    <location>
        <begin position="49"/>
        <end position="123"/>
    </location>
</feature>
<feature type="disulfide bond" evidence="3">
    <location>
        <begin position="163"/>
        <end position="217"/>
    </location>
</feature>
<feature type="splice variant" id="VSP_034892" description="In isoform 3." evidence="5">
    <original>AVGLETEIHVQAP</original>
    <variation>GKLFVEHSIPVTL</variation>
    <location>
        <begin position="142"/>
        <end position="154"/>
    </location>
</feature>
<feature type="splice variant" id="VSP_034893" description="In isoform 3." evidence="5">
    <location>
        <begin position="155"/>
        <end position="398"/>
    </location>
</feature>
<feature type="splice variant" id="VSP_034894" description="In isoform 2." evidence="5">
    <original>NELFNQDYLWVGIFPFSVLSL</original>
    <variation>SEYCHLSWLLISKQREKYGGN</variation>
    <location>
        <begin position="236"/>
        <end position="256"/>
    </location>
</feature>
<feature type="splice variant" id="VSP_034895" description="In isoform 2." evidence="5">
    <location>
        <begin position="257"/>
        <end position="398"/>
    </location>
</feature>
<feature type="sequence conflict" description="In Ref. 1; ABS30726." evidence="6" ref="1">
    <original>H</original>
    <variation>Y</variation>
    <location>
        <position position="36"/>
    </location>
</feature>
<feature type="sequence conflict" description="In Ref. 1; ABS30726." evidence="6" ref="1">
    <original>E</original>
    <variation>V</variation>
    <location>
        <position position="46"/>
    </location>
</feature>
<feature type="sequence conflict" description="In Ref. 1; ABU87906." evidence="6" ref="1">
    <original>G</original>
    <variation>L</variation>
    <location>
        <position position="225"/>
    </location>
</feature>
<name>SKIT8_MOUSE</name>
<keyword id="KW-0025">Alternative splicing</keyword>
<keyword id="KW-1015">Disulfide bond</keyword>
<keyword id="KW-0325">Glycoprotein</keyword>
<keyword id="KW-0393">Immunoglobulin domain</keyword>
<keyword id="KW-0472">Membrane</keyword>
<keyword id="KW-1185">Reference proteome</keyword>
<keyword id="KW-0677">Repeat</keyword>
<keyword id="KW-0732">Signal</keyword>
<keyword id="KW-0812">Transmembrane</keyword>
<keyword id="KW-1133">Transmembrane helix</keyword>
<proteinExistence type="evidence at transcript level"/>
<protein>
    <recommendedName>
        <fullName>Selection and upkeep of intraepithelial T-cells protein 8</fullName>
        <shortName>Skint-8</shortName>
    </recommendedName>
</protein>
<gene>
    <name type="primary">Skint8</name>
</gene>
<reference key="1">
    <citation type="journal article" date="2008" name="Nat. Genet.">
        <title>Skint1, the prototype of a newly identified immunoglobulin superfamily gene cluster, positively selects epidermal gammadelta T cells.</title>
        <authorList>
            <person name="Boyden L.M."/>
            <person name="Lewis J.M."/>
            <person name="Barbee S.D."/>
            <person name="Bas A."/>
            <person name="Girardi M."/>
            <person name="Hayday A.C."/>
            <person name="Tigelaar R.E."/>
            <person name="Lifton R.P."/>
        </authorList>
    </citation>
    <scope>NUCLEOTIDE SEQUENCE [MRNA] (ISOFORMS 1; 2 AND 3)</scope>
    <scope>TISSUE SPECIFICITY</scope>
    <source>
        <strain>C57BL/6J</strain>
        <strain>FVB/NJ</strain>
    </source>
</reference>
<reference key="2">
    <citation type="journal article" date="2009" name="PLoS Biol.">
        <title>Lineage-specific biology revealed by a finished genome assembly of the mouse.</title>
        <authorList>
            <person name="Church D.M."/>
            <person name="Goodstadt L."/>
            <person name="Hillier L.W."/>
            <person name="Zody M.C."/>
            <person name="Goldstein S."/>
            <person name="She X."/>
            <person name="Bult C.J."/>
            <person name="Agarwala R."/>
            <person name="Cherry J.L."/>
            <person name="DiCuccio M."/>
            <person name="Hlavina W."/>
            <person name="Kapustin Y."/>
            <person name="Meric P."/>
            <person name="Maglott D."/>
            <person name="Birtle Z."/>
            <person name="Marques A.C."/>
            <person name="Graves T."/>
            <person name="Zhou S."/>
            <person name="Teague B."/>
            <person name="Potamousis K."/>
            <person name="Churas C."/>
            <person name="Place M."/>
            <person name="Herschleb J."/>
            <person name="Runnheim R."/>
            <person name="Forrest D."/>
            <person name="Amos-Landgraf J."/>
            <person name="Schwartz D.C."/>
            <person name="Cheng Z."/>
            <person name="Lindblad-Toh K."/>
            <person name="Eichler E.E."/>
            <person name="Ponting C.P."/>
        </authorList>
    </citation>
    <scope>NUCLEOTIDE SEQUENCE [LARGE SCALE GENOMIC DNA]</scope>
    <source>
        <strain>C57BL/6J</strain>
    </source>
</reference>
<dbReference type="EMBL" id="EF494903">
    <property type="protein sequence ID" value="ABS30725.1"/>
    <property type="status" value="ALT_INIT"/>
    <property type="molecule type" value="mRNA"/>
</dbReference>
<dbReference type="EMBL" id="EF494904">
    <property type="protein sequence ID" value="ABS30726.1"/>
    <property type="status" value="ALT_INIT"/>
    <property type="molecule type" value="mRNA"/>
</dbReference>
<dbReference type="EMBL" id="EU099307">
    <property type="protein sequence ID" value="ABU87905.1"/>
    <property type="status" value="ALT_INIT"/>
    <property type="molecule type" value="mRNA"/>
</dbReference>
<dbReference type="EMBL" id="EU099308">
    <property type="protein sequence ID" value="ABU87906.1"/>
    <property type="status" value="ALT_INIT"/>
    <property type="molecule type" value="mRNA"/>
</dbReference>
<dbReference type="EMBL" id="AL627076">
    <property type="status" value="NOT_ANNOTATED_CDS"/>
    <property type="molecule type" value="Genomic_DNA"/>
</dbReference>
<dbReference type="CCDS" id="CCDS51265.1">
    <molecule id="A7XV07-1"/>
</dbReference>
<dbReference type="RefSeq" id="NP_001093936.2">
    <molecule id="A7XV07-1"/>
    <property type="nucleotide sequence ID" value="NM_001100466.1"/>
</dbReference>
<dbReference type="RefSeq" id="XP_017175827.1">
    <molecule id="A7XV07-1"/>
    <property type="nucleotide sequence ID" value="XM_017320338.2"/>
</dbReference>
<dbReference type="SMR" id="A7XV07"/>
<dbReference type="FunCoup" id="A7XV07">
    <property type="interactions" value="527"/>
</dbReference>
<dbReference type="STRING" id="10090.ENSMUSP00000133268"/>
<dbReference type="GlyCosmos" id="A7XV07">
    <property type="glycosylation" value="2 sites, No reported glycans"/>
</dbReference>
<dbReference type="GlyGen" id="A7XV07">
    <property type="glycosylation" value="2 sites"/>
</dbReference>
<dbReference type="PaxDb" id="10090-ENSMUSP00000133268"/>
<dbReference type="Ensembl" id="ENSMUST00000165046.2">
    <molecule id="A7XV07-1"/>
    <property type="protein sequence ID" value="ENSMUSP00000133268.2"/>
    <property type="gene ID" value="ENSMUSG00000078599.10"/>
</dbReference>
<dbReference type="GeneID" id="639774"/>
<dbReference type="KEGG" id="mmu:639774"/>
<dbReference type="UCSC" id="uc008udl.1">
    <molecule id="A7XV07-2"/>
    <property type="organism name" value="mouse"/>
</dbReference>
<dbReference type="UCSC" id="uc009vct.1">
    <molecule id="A7XV07-3"/>
    <property type="organism name" value="mouse"/>
</dbReference>
<dbReference type="UCSC" id="uc009vcu.1">
    <molecule id="A7XV07-1"/>
    <property type="organism name" value="mouse"/>
</dbReference>
<dbReference type="AGR" id="MGI:3651523"/>
<dbReference type="CTD" id="639774"/>
<dbReference type="MGI" id="MGI:3651523">
    <property type="gene designation" value="Skint8"/>
</dbReference>
<dbReference type="VEuPathDB" id="HostDB:ENSMUSG00000078599"/>
<dbReference type="eggNOG" id="ENOG502TCM5">
    <property type="taxonomic scope" value="Eukaryota"/>
</dbReference>
<dbReference type="GeneTree" id="ENSGT00940000164707"/>
<dbReference type="InParanoid" id="A7XV07"/>
<dbReference type="OMA" id="CFTICPI"/>
<dbReference type="OrthoDB" id="9049620at2759"/>
<dbReference type="PhylomeDB" id="A7XV07"/>
<dbReference type="TreeFam" id="TF331083"/>
<dbReference type="BioGRID-ORCS" id="639774">
    <property type="hits" value="2 hits in 77 CRISPR screens"/>
</dbReference>
<dbReference type="PRO" id="PR:A7XV07"/>
<dbReference type="Proteomes" id="UP000000589">
    <property type="component" value="Chromosome 4"/>
</dbReference>
<dbReference type="RNAct" id="A7XV07">
    <property type="molecule type" value="protein"/>
</dbReference>
<dbReference type="Bgee" id="ENSMUSG00000078599">
    <property type="expression patterns" value="Expressed in zone of skin and 8 other cell types or tissues"/>
</dbReference>
<dbReference type="ExpressionAtlas" id="A7XV07">
    <property type="expression patterns" value="baseline and differential"/>
</dbReference>
<dbReference type="GO" id="GO:0016020">
    <property type="term" value="C:membrane"/>
    <property type="evidence" value="ECO:0007669"/>
    <property type="project" value="UniProtKB-SubCell"/>
</dbReference>
<dbReference type="CDD" id="cd05713">
    <property type="entry name" value="IgV_MOG_like"/>
    <property type="match status" value="1"/>
</dbReference>
<dbReference type="FunFam" id="2.60.40.10:FF:000088">
    <property type="entry name" value="Butyrophilin subfamily 1 member A1"/>
    <property type="match status" value="1"/>
</dbReference>
<dbReference type="FunFam" id="2.60.40.10:FF:000142">
    <property type="entry name" value="V-set domain-containing T-cell activation inhibitor 1"/>
    <property type="match status" value="1"/>
</dbReference>
<dbReference type="Gene3D" id="2.60.40.10">
    <property type="entry name" value="Immunoglobulins"/>
    <property type="match status" value="2"/>
</dbReference>
<dbReference type="InterPro" id="IPR053896">
    <property type="entry name" value="BTN3A2-like_Ig-C"/>
</dbReference>
<dbReference type="InterPro" id="IPR007110">
    <property type="entry name" value="Ig-like_dom"/>
</dbReference>
<dbReference type="InterPro" id="IPR036179">
    <property type="entry name" value="Ig-like_dom_sf"/>
</dbReference>
<dbReference type="InterPro" id="IPR013783">
    <property type="entry name" value="Ig-like_fold"/>
</dbReference>
<dbReference type="InterPro" id="IPR003599">
    <property type="entry name" value="Ig_sub"/>
</dbReference>
<dbReference type="InterPro" id="IPR013106">
    <property type="entry name" value="Ig_V-set"/>
</dbReference>
<dbReference type="InterPro" id="IPR050504">
    <property type="entry name" value="IgSF_BTN/MOG"/>
</dbReference>
<dbReference type="PANTHER" id="PTHR24100">
    <property type="entry name" value="BUTYROPHILIN"/>
    <property type="match status" value="1"/>
</dbReference>
<dbReference type="PANTHER" id="PTHR24100:SF51">
    <property type="entry name" value="SELECTION AND UPKEEP OF INTRAEPITHELIAL T-CELLS PROTEIN 7-RELATED"/>
    <property type="match status" value="1"/>
</dbReference>
<dbReference type="Pfam" id="PF22705">
    <property type="entry name" value="C2-set_3"/>
    <property type="match status" value="1"/>
</dbReference>
<dbReference type="Pfam" id="PF07686">
    <property type="entry name" value="V-set"/>
    <property type="match status" value="1"/>
</dbReference>
<dbReference type="SMART" id="SM00409">
    <property type="entry name" value="IG"/>
    <property type="match status" value="1"/>
</dbReference>
<dbReference type="SUPFAM" id="SSF48726">
    <property type="entry name" value="Immunoglobulin"/>
    <property type="match status" value="2"/>
</dbReference>
<dbReference type="PROSITE" id="PS50835">
    <property type="entry name" value="IG_LIKE"/>
    <property type="match status" value="2"/>
</dbReference>
<accession>A7XV07</accession>
<accession>A7TZF9</accession>
<accession>A7TZG0</accession>
<accession>A7XV10</accession>
<accession>E9QA97</accession>
<organism>
    <name type="scientific">Mus musculus</name>
    <name type="common">Mouse</name>
    <dbReference type="NCBI Taxonomy" id="10090"/>
    <lineage>
        <taxon>Eukaryota</taxon>
        <taxon>Metazoa</taxon>
        <taxon>Chordata</taxon>
        <taxon>Craniata</taxon>
        <taxon>Vertebrata</taxon>
        <taxon>Euteleostomi</taxon>
        <taxon>Mammalia</taxon>
        <taxon>Eutheria</taxon>
        <taxon>Euarchontoglires</taxon>
        <taxon>Glires</taxon>
        <taxon>Rodentia</taxon>
        <taxon>Myomorpha</taxon>
        <taxon>Muroidea</taxon>
        <taxon>Muridae</taxon>
        <taxon>Murinae</taxon>
        <taxon>Mus</taxon>
        <taxon>Mus</taxon>
    </lineage>
</organism>
<comment type="function">
    <text evidence="1">May act by engaging a cell surface molecule on immature T-cells in the embryonic thymus.</text>
</comment>
<comment type="subcellular location">
    <subcellularLocation>
        <location evidence="6">Membrane</location>
        <topology evidence="6">Multi-pass membrane protein</topology>
    </subcellularLocation>
</comment>
<comment type="alternative products">
    <event type="alternative splicing"/>
    <isoform>
        <id>A7XV07-1</id>
        <name>1</name>
        <name>A</name>
        <sequence type="displayed"/>
    </isoform>
    <isoform>
        <id>A7XV07-2</id>
        <name>2</name>
        <name>B</name>
        <sequence type="described" ref="VSP_034894 VSP_034895"/>
    </isoform>
    <isoform>
        <id>A7XV07-3</id>
        <name>3</name>
        <name>C</name>
        <sequence type="described" ref="VSP_034892 VSP_034893"/>
    </isoform>
</comment>
<comment type="tissue specificity">
    <text evidence="4">Expressed in skin, thymus, testis and, to a lower extent, bladder, brain, heart, kidney, mammary gland, small intestine and uterus.</text>
</comment>
<comment type="miscellaneous">
    <text>Encoded by one of the 11 copies of Skint genes clustered in the D1 region of the chromosome 4.</text>
</comment>
<comment type="similarity">
    <text evidence="6">Belongs to the SKINT family.</text>
</comment>
<comment type="sequence caution" evidence="6">
    <conflict type="erroneous initiation">
        <sequence resource="EMBL-CDS" id="ABS30725"/>
    </conflict>
    <text>Truncated N-terminus.</text>
</comment>
<comment type="sequence caution" evidence="6">
    <conflict type="erroneous initiation">
        <sequence resource="EMBL-CDS" id="ABS30726"/>
    </conflict>
    <text>Truncated N-terminus.</text>
</comment>
<comment type="sequence caution" evidence="6">
    <conflict type="erroneous initiation">
        <sequence resource="EMBL-CDS" id="ABU87905"/>
    </conflict>
    <text>Truncated N-terminus.</text>
</comment>
<comment type="sequence caution" evidence="6">
    <conflict type="erroneous initiation">
        <sequence resource="EMBL-CDS" id="ABU87906"/>
    </conflict>
    <text>Truncated N-terminus.</text>
</comment>